<accession>P04620</accession>
<organism>
    <name type="scientific">Human immunodeficiency virus type 1 group M subtype B (isolate BRU/LAI)</name>
    <name type="common">HIV-1</name>
    <dbReference type="NCBI Taxonomy" id="11686"/>
    <lineage>
        <taxon>Viruses</taxon>
        <taxon>Riboviria</taxon>
        <taxon>Pararnavirae</taxon>
        <taxon>Artverviricota</taxon>
        <taxon>Revtraviricetes</taxon>
        <taxon>Ortervirales</taxon>
        <taxon>Retroviridae</taxon>
        <taxon>Orthoretrovirinae</taxon>
        <taxon>Lentivirus</taxon>
        <taxon>Human immunodeficiency virus type 1</taxon>
    </lineage>
</organism>
<proteinExistence type="evidence at protein level"/>
<gene>
    <name evidence="1" type="primary">rev</name>
</gene>
<dbReference type="EMBL" id="K02013">
    <property type="protein sequence ID" value="AAB59746.1"/>
    <property type="molecule type" value="Genomic_RNA"/>
</dbReference>
<dbReference type="EMBL" id="M19921">
    <property type="protein sequence ID" value="AAA44986.1"/>
    <property type="molecule type" value="Genomic_RNA"/>
</dbReference>
<dbReference type="SMR" id="P04620"/>
<dbReference type="IntAct" id="P04620">
    <property type="interactions" value="2"/>
</dbReference>
<dbReference type="Proteomes" id="UP000007692">
    <property type="component" value="Genome"/>
</dbReference>
<dbReference type="GO" id="GO:0030430">
    <property type="term" value="C:host cell cytoplasm"/>
    <property type="evidence" value="ECO:0007669"/>
    <property type="project" value="UniProtKB-SubCell"/>
</dbReference>
<dbReference type="GO" id="GO:0044196">
    <property type="term" value="C:host cell nucleolus"/>
    <property type="evidence" value="ECO:0007669"/>
    <property type="project" value="UniProtKB-SubCell"/>
</dbReference>
<dbReference type="GO" id="GO:0003700">
    <property type="term" value="F:DNA-binding transcription factor activity"/>
    <property type="evidence" value="ECO:0007669"/>
    <property type="project" value="UniProtKB-UniRule"/>
</dbReference>
<dbReference type="GO" id="GO:0003723">
    <property type="term" value="F:RNA binding"/>
    <property type="evidence" value="ECO:0007669"/>
    <property type="project" value="UniProtKB-UniRule"/>
</dbReference>
<dbReference type="GO" id="GO:0051028">
    <property type="term" value="P:mRNA transport"/>
    <property type="evidence" value="ECO:0007669"/>
    <property type="project" value="UniProtKB-UniRule"/>
</dbReference>
<dbReference type="GO" id="GO:0016032">
    <property type="term" value="P:viral process"/>
    <property type="evidence" value="ECO:0007669"/>
    <property type="project" value="UniProtKB-UniRule"/>
</dbReference>
<dbReference type="Gene3D" id="6.10.140.630">
    <property type="match status" value="1"/>
</dbReference>
<dbReference type="HAMAP" id="MF_04077">
    <property type="entry name" value="REV_HIV1"/>
    <property type="match status" value="1"/>
</dbReference>
<dbReference type="InterPro" id="IPR000625">
    <property type="entry name" value="REV_protein"/>
</dbReference>
<dbReference type="Pfam" id="PF00424">
    <property type="entry name" value="REV"/>
    <property type="match status" value="1"/>
</dbReference>
<reference key="1">
    <citation type="journal article" date="1985" name="Cell">
        <title>Nucleotide sequence of the AIDS virus, LAV.</title>
        <authorList>
            <person name="Wain-Hobson S."/>
            <person name="Sonigo P."/>
            <person name="Danos O."/>
            <person name="Cole S."/>
            <person name="Alizon M."/>
        </authorList>
    </citation>
    <scope>NUCLEOTIDE SEQUENCE [GENOMIC RNA]</scope>
</reference>
<reference key="2">
    <citation type="submission" date="1988-06" db="EMBL/GenBank/DDBJ databases">
        <authorList>
            <person name="Buckler C.E."/>
            <person name="Buckler-White A.J."/>
            <person name="Willey R.L."/>
            <person name="McCoy J."/>
        </authorList>
    </citation>
    <scope>NUCLEOTIDE SEQUENCE [GENOMIC RNA]</scope>
    <source>
        <strain>Clone pNL4-3</strain>
    </source>
</reference>
<reference key="3">
    <citation type="journal article" date="1997" name="J. Mol. Biol.">
        <title>Interactions between HIV Rev and nuclear import and export factors: the Rev nuclear localisation signal mediates specific binding to human importin-beta.</title>
        <authorList>
            <person name="Henderson B.R."/>
            <person name="Percipalle P."/>
        </authorList>
    </citation>
    <scope>INTERACTION WITH HUMAN KPNB1</scope>
    <scope>MUTAGENESIS OF ARG-38; ARG-39; LEU-78 AND LEU-81</scope>
</reference>
<reference key="4">
    <citation type="journal article" date="1999" name="Arch. Biochem. Biophys.">
        <title>The ins and outs of HIV Rev.</title>
        <authorList>
            <person name="Hope T.J."/>
        </authorList>
    </citation>
    <scope>REVIEW</scope>
</reference>
<organismHost>
    <name type="scientific">Homo sapiens</name>
    <name type="common">Human</name>
    <dbReference type="NCBI Taxonomy" id="9606"/>
</organismHost>
<comment type="function">
    <text evidence="1">Escorts unspliced or incompletely spliced viral pre-mRNAs (late transcripts) out of the nucleus of infected cells. These pre-mRNAs carry a recognition sequence called Rev responsive element (RRE) located in the env gene, that is not present in fully spliced viral mRNAs (early transcripts). This function is essential since most viral proteins are translated from unspliced or partially spliced pre-mRNAs which cannot exit the nucleus by the pathway used by fully processed cellular mRNAs. Rev itself is translated from a fully spliced mRNA that readily exits the nucleus. Rev's nuclear localization signal (NLS) binds directly to KPNB1/Importin beta-1 without previous binding to KPNA1/Importin alpha-1. KPNB1 binds to the GDP bound form of RAN (Ran-GDP) and targets Rev to the nucleus. In the nucleus, the conversion from Ran-GDP to Ran-GTP dissociates Rev from KPNB1 and allows Rev's binding to the RRE in viral pre-mRNAs. Rev multimerization on the RRE via cooperative assembly exposes its nuclear export signal (NES) to the surface. Rev can then form a complex with XPO1/CRM1 and Ran-GTP, leading to nuclear export of the complex. Conversion from Ran-GTP to Ran-GDP mediates dissociation of the Rev/RRE/XPO1/RAN complex, so that Rev can return to the nucleus for a subsequent round of export. Beside KPNB1, also seems to interact with TNPO1/Transportin-1, RANBP5/IPO5 and IPO7/RANBP7 for nuclear import. The nucleoporin-like HRB/RIP is an essential cofactor that probably indirectly interacts with Rev to release HIV RNAs from the perinuclear region to the cytoplasm.</text>
</comment>
<comment type="subunit">
    <text evidence="1">Homomultimer; when bound to the RRE. Multimeric assembly is essential for activity and may involve XPO1. Binds to human KPNB1, XPO1, TNPO1, RANBP5 and IPO7. Interacts with the viral Integrase. Interacts with human KHDRBS1. Interacts with human NAP1; this interaction decreases Rev multimerization and stimulates its activity. Interacts with human DEAD-box helicases DDX3 and DDX24; these interactions may serve for viral RNA export to the cytoplasm and packaging, respectively. Interacts with human PSIP1; this interaction may inhibit HIV-1 DNA integration by promoting dissociation of the Integrase-LEDGF/p75 complex.</text>
</comment>
<comment type="interaction">
    <interactant intactId="EBI-10687101">
        <id>P04620</id>
    </interactant>
    <interactant intactId="EBI-349938">
        <id>P52292</id>
        <label>KPNA2</label>
    </interactant>
    <organismsDiffer>true</organismsDiffer>
    <experiments>2</experiments>
</comment>
<comment type="interaction">
    <interactant intactId="EBI-10687101">
        <id>P04620</id>
    </interactant>
    <interactant intactId="EBI-286758">
        <id>Q14974</id>
        <label>KPNB1</label>
    </interactant>
    <organismsDiffer>true</organismsDiffer>
    <experiments>3</experiments>
</comment>
<comment type="subcellular location">
    <subcellularLocation>
        <location evidence="1">Host nucleus</location>
        <location evidence="1">Host nucleolus</location>
    </subcellularLocation>
    <subcellularLocation>
        <location evidence="1">Host cytoplasm</location>
    </subcellularLocation>
    <text evidence="1">The presence of both nuclear import and nuclear export signals leads to continuous shuttling between the nucleus and cytoplasm.</text>
</comment>
<comment type="domain">
    <text evidence="1">The RNA-binding motif binds to the RRE, a 240 bp stem-and-loop structure present in incompletely spliced viral pre-mRNAs. This region also contains the NLS which mediates nuclear localization via KPNB1 binding and, when the N-terminal sequence is present, nucleolar targeting. These overlapping functions prevent Rev bound to RRE from undesirable return to the nucleus. When Rev binds the RRE, the NLS becomes masked while the NES remains accessible. The leucine-rich NES mediates binding to human XPO1.</text>
</comment>
<comment type="PTM">
    <text evidence="1">Asymmetrically arginine dimethylated at one site by host PRMT6. Methylation impairs the RNA-binding activity and export of viral RNA from the nucleus to the cytoplasm.</text>
</comment>
<comment type="PTM">
    <text evidence="1">Phosphorylated by protein kinase CK2. Presence of, and maybe binding to the N-terminus of the regulatory beta subunit of CK2 is necessary for CK2-mediated Rev's phosphorylation.</text>
</comment>
<comment type="miscellaneous">
    <text>The infectious clone pNL4-3 is a chimeric provirus that consists of DNA from HIV isolates NY5 (5' half) and BRU (3' half).</text>
</comment>
<comment type="miscellaneous">
    <text evidence="1">HIV-1 lineages are divided in three main groups, M (for Major), O (for Outlier), and N (for New, or Non-M, Non-O). The vast majority of strains found worldwide belong to the group M. Group O seems to be endemic to and largely confined to Cameroon and neighboring countries in West Central Africa, where these viruses represent a small minority of HIV-1 strains. The group N is represented by a limited number of isolates from Cameroonian persons. The group M is further subdivided in 9 clades or subtypes (A to D, F to H, J and K).</text>
</comment>
<comment type="similarity">
    <text evidence="1">Belongs to the HIV-1 REV protein family.</text>
</comment>
<evidence type="ECO:0000255" key="1">
    <source>
        <dbReference type="HAMAP-Rule" id="MF_04077"/>
    </source>
</evidence>
<evidence type="ECO:0000256" key="2">
    <source>
        <dbReference type="SAM" id="MobiDB-lite"/>
    </source>
</evidence>
<evidence type="ECO:0000269" key="3">
    <source>
    </source>
</evidence>
<name>REV_HV1BR</name>
<keyword id="KW-0014">AIDS</keyword>
<keyword id="KW-1035">Host cytoplasm</keyword>
<keyword id="KW-1048">Host nucleus</keyword>
<keyword id="KW-0945">Host-virus interaction</keyword>
<keyword id="KW-0488">Methylation</keyword>
<keyword id="KW-0509">mRNA transport</keyword>
<keyword id="KW-0597">Phosphoprotein</keyword>
<keyword id="KW-1185">Reference proteome</keyword>
<keyword id="KW-0694">RNA-binding</keyword>
<keyword id="KW-0813">Transport</keyword>
<feature type="chain" id="PRO_0000085260" description="Protein Rev">
    <location>
        <begin position="1"/>
        <end position="116"/>
    </location>
</feature>
<feature type="region of interest" description="Homomultimerization" evidence="1">
    <location>
        <begin position="18"/>
        <end position="26"/>
    </location>
</feature>
<feature type="region of interest" description="Disordered" evidence="2">
    <location>
        <begin position="23"/>
        <end position="49"/>
    </location>
</feature>
<feature type="region of interest" description="Disordered" evidence="2">
    <location>
        <begin position="92"/>
        <end position="116"/>
    </location>
</feature>
<feature type="short sequence motif" description="Nuclear localization signal and RNA-binding (RRE)" evidence="1">
    <location>
        <begin position="34"/>
        <end position="50"/>
    </location>
</feature>
<feature type="short sequence motif" description="Nuclear export signal and binding to XPO1" evidence="1">
    <location>
        <begin position="73"/>
        <end position="84"/>
    </location>
</feature>
<feature type="compositionally biased region" description="Basic residues" evidence="2">
    <location>
        <begin position="36"/>
        <end position="47"/>
    </location>
</feature>
<feature type="modified residue" description="Phosphoserine; by host CK2" evidence="1">
    <location>
        <position position="5"/>
    </location>
</feature>
<feature type="modified residue" description="Phosphoserine; by host CK2" evidence="1">
    <location>
        <position position="8"/>
    </location>
</feature>
<feature type="modified residue" description="Phosphoserine; by host" evidence="1">
    <location>
        <position position="92"/>
    </location>
</feature>
<feature type="modified residue" description="Phosphoserine; by host" evidence="1">
    <location>
        <position position="99"/>
    </location>
</feature>
<feature type="sequence variant" description="In strain: Clone pNL4-3.">
    <original>DLLKA</original>
    <variation>ELIRT</variation>
    <location>
        <begin position="11"/>
        <end position="15"/>
    </location>
</feature>
<feature type="sequence variant" description="In strain: Clone pNL4-3.">
    <original>F</original>
    <variation>L</variation>
    <location>
        <position position="21"/>
    </location>
</feature>
<feature type="mutagenesis site" description="No effect on KPNB1 binding; when associated with L-39." evidence="3">
    <original>R</original>
    <variation>D</variation>
    <location>
        <position position="38"/>
    </location>
</feature>
<feature type="mutagenesis site" description="No effect on KPNB1 binding; when associated with D-38." evidence="3">
    <original>R</original>
    <variation>L</variation>
    <location>
        <position position="39"/>
    </location>
</feature>
<feature type="mutagenesis site" description="Complete loss of Rev export." evidence="3">
    <original>L</original>
    <variation>A</variation>
    <location>
        <position position="78"/>
    </location>
</feature>
<feature type="mutagenesis site" description="Complete loss of Rev export." evidence="3">
    <original>L</original>
    <variation>A</variation>
    <location>
        <position position="81"/>
    </location>
</feature>
<sequence length="116" mass="13067">MAGRSGDSDEDLLKAVRLIKFLYQSNPPPNPEGTRQARRNRRRRWRERQRQIHSISERILSTYLGRSAEPVPLQLPPLERLTLDCNEDCGTSGTQGVGSPQILVESPTVLESGTKE</sequence>
<protein>
    <recommendedName>
        <fullName evidence="1">Protein Rev</fullName>
    </recommendedName>
    <alternativeName>
        <fullName evidence="1">ART/TRS</fullName>
    </alternativeName>
    <alternativeName>
        <fullName evidence="1">Anti-repression transactivator</fullName>
    </alternativeName>
    <alternativeName>
        <fullName evidence="1">Regulator of expression of viral proteins</fullName>
    </alternativeName>
</protein>